<sequence>MKKVSVIMPTFNNGEKLHRTISSVLNQTMKSTDYELIIIDDHSNDNGETLNVIKKYKGLVRFKQLKKNSGNASVPRNTGLKMSKAEYVFFLDSDDLLHERALEDLYNYGKENNSDLIIGKYGVEGKGRSVPKAIFEKGNVAKADIIDNSIFYALSVLKMFKKSVIDKNKIKFKTFSKTAEDQLFTIEFLMNSKNYSIKTDYEYYIVVNDFESSNHLSVNKSTGNQYFATINEIYKAIYKSPIYKNQEKRHQLAGKYTTRLLRHGQKKNFANSKMKYEDKIEWLNNFSKTINKVPRDSDKYVTQIFNLKLEAIRQNDLLAVMIADKLL</sequence>
<accession>A0A0H3JNB0</accession>
<reference key="1">
    <citation type="journal article" date="2001" name="Lancet">
        <title>Whole genome sequencing of meticillin-resistant Staphylococcus aureus.</title>
        <authorList>
            <person name="Kuroda M."/>
            <person name="Ohta T."/>
            <person name="Uchiyama I."/>
            <person name="Baba T."/>
            <person name="Yuzawa H."/>
            <person name="Kobayashi I."/>
            <person name="Cui L."/>
            <person name="Oguchi A."/>
            <person name="Aoki K."/>
            <person name="Nagai Y."/>
            <person name="Lian J.-Q."/>
            <person name="Ito T."/>
            <person name="Kanamori M."/>
            <person name="Matsumaru H."/>
            <person name="Maruyama A."/>
            <person name="Murakami H."/>
            <person name="Hosoyama A."/>
            <person name="Mizutani-Ui Y."/>
            <person name="Takahashi N.K."/>
            <person name="Sawano T."/>
            <person name="Inoue R."/>
            <person name="Kaito C."/>
            <person name="Sekimizu K."/>
            <person name="Hirakawa H."/>
            <person name="Kuhara S."/>
            <person name="Goto S."/>
            <person name="Yabuzaki J."/>
            <person name="Kanehisa M."/>
            <person name="Yamashita A."/>
            <person name="Oshima K."/>
            <person name="Furuya K."/>
            <person name="Yoshino C."/>
            <person name="Shiba T."/>
            <person name="Hattori M."/>
            <person name="Ogasawara N."/>
            <person name="Hayashi H."/>
            <person name="Hiramatsu K."/>
        </authorList>
    </citation>
    <scope>NUCLEOTIDE SEQUENCE [LARGE SCALE GENOMIC DNA]</scope>
    <source>
        <strain>N315</strain>
    </source>
</reference>
<reference evidence="6 7 8 9 10 11" key="2">
    <citation type="journal article" date="2018" name="Nature">
        <title>Methicillin-resistant Staphylococcus aureus alters cell wall glycosylation to evade immunity.</title>
        <authorList>
            <person name="Gerlach D."/>
            <person name="Guo Y."/>
            <person name="De Castro C."/>
            <person name="Kim S.H."/>
            <person name="Schlatterer K."/>
            <person name="Xu F.F."/>
            <person name="Pereira C."/>
            <person name="Seeberger P.H."/>
            <person name="Ali S."/>
            <person name="Codee J."/>
            <person name="Sirisarn W."/>
            <person name="Schulte B."/>
            <person name="Wolz C."/>
            <person name="Larsen J."/>
            <person name="Molinaro A."/>
            <person name="Lee B.L."/>
            <person name="Xia G."/>
            <person name="Stehle T."/>
            <person name="Peschel A."/>
        </authorList>
    </citation>
    <scope>X-RAY CRYSTALLOGRAPHY (1.80 ANGSTROMS) OF APOENZYME AND IN COMPLEXES WITH SUBSTRATE; SUBSTRATE ANALOGS AND MANGANESE</scope>
    <scope>FUNCTION</scope>
    <scope>CATALYTIC ACTIVITY</scope>
    <scope>COFACTOR</scope>
    <scope>PATHWAY</scope>
    <scope>SUBUNIT</scope>
    <scope>DISRUPTION PHENOTYPE</scope>
    <scope>DRUG TARGET</scope>
    <scope>ACTIVE SITE</scope>
    <scope>MUTAGENESIS OF ARG-76; ASP-92; ASP-94; TYR-152; GLU-180; ASP-181; ASP-209; LYS-255; ARG-259; ARG-262; HIS-263 AND ILE-322</scope>
    <source>
        <strain>N315</strain>
    </source>
</reference>
<protein>
    <recommendedName>
        <fullName evidence="3">Poly(ribitol-phosphate) beta-N-acetylglucosaminyltransferase TarP</fullName>
        <ecNumber evidence="1">2.4.1.-</ecNumber>
    </recommendedName>
    <alternativeName>
        <fullName evidence="2">WTA glycosyltransferase</fullName>
    </alternativeName>
</protein>
<evidence type="ECO:0000269" key="1">
    <source>
    </source>
</evidence>
<evidence type="ECO:0000303" key="2">
    <source>
    </source>
</evidence>
<evidence type="ECO:0000305" key="3"/>
<evidence type="ECO:0000305" key="4">
    <source>
    </source>
</evidence>
<evidence type="ECO:0000312" key="5">
    <source>
        <dbReference type="EMBL" id="BAB43088.1"/>
    </source>
</evidence>
<evidence type="ECO:0007744" key="6">
    <source>
        <dbReference type="PDB" id="6H1J"/>
    </source>
</evidence>
<evidence type="ECO:0007744" key="7">
    <source>
        <dbReference type="PDB" id="6H21"/>
    </source>
</evidence>
<evidence type="ECO:0007744" key="8">
    <source>
        <dbReference type="PDB" id="6H2N"/>
    </source>
</evidence>
<evidence type="ECO:0007744" key="9">
    <source>
        <dbReference type="PDB" id="6H4F"/>
    </source>
</evidence>
<evidence type="ECO:0007744" key="10">
    <source>
        <dbReference type="PDB" id="6H4M"/>
    </source>
</evidence>
<evidence type="ECO:0007744" key="11">
    <source>
        <dbReference type="PDB" id="6HNQ"/>
    </source>
</evidence>
<evidence type="ECO:0007829" key="12">
    <source>
        <dbReference type="PDB" id="6H21"/>
    </source>
</evidence>
<name>TARP_STAAN</name>
<feature type="chain" id="PRO_0000446443" description="Poly(ribitol-phosphate) beta-N-acetylglucosaminyltransferase TarP">
    <location>
        <begin position="1"/>
        <end position="327"/>
    </location>
</feature>
<feature type="active site" description="Proton acceptor" evidence="4">
    <location>
        <position position="181"/>
    </location>
</feature>
<feature type="binding site" evidence="1">
    <location>
        <position position="9"/>
    </location>
    <ligand>
        <name>UDP-N-acetyl-alpha-D-glucosamine</name>
        <dbReference type="ChEBI" id="CHEBI:57705"/>
    </ligand>
</feature>
<feature type="binding site" evidence="1">
    <location>
        <position position="41"/>
    </location>
    <ligand>
        <name>UDP-N-acetyl-alpha-D-glucosamine</name>
        <dbReference type="ChEBI" id="CHEBI:57705"/>
    </ligand>
</feature>
<feature type="binding site" evidence="1">
    <location>
        <position position="68"/>
    </location>
    <ligand>
        <name>UDP-N-acetyl-alpha-D-glucosamine</name>
        <dbReference type="ChEBI" id="CHEBI:57705"/>
    </ligand>
</feature>
<feature type="binding site" evidence="1">
    <location>
        <position position="76"/>
    </location>
    <ligand>
        <name>UDP-N-acetyl-alpha-D-glucosamine</name>
        <dbReference type="ChEBI" id="CHEBI:57705"/>
    </ligand>
</feature>
<feature type="binding site" evidence="1">
    <location>
        <begin position="92"/>
        <end position="94"/>
    </location>
    <ligand>
        <name>UDP-N-acetyl-alpha-D-glucosamine</name>
        <dbReference type="ChEBI" id="CHEBI:57705"/>
    </ligand>
</feature>
<feature type="binding site" evidence="1">
    <location>
        <position position="94"/>
    </location>
    <ligand>
        <name>Mn(2+)</name>
        <dbReference type="ChEBI" id="CHEBI:29035"/>
    </ligand>
</feature>
<feature type="mutagenesis site" description="Loss of activity." evidence="1">
    <original>R</original>
    <variation>A</variation>
    <location>
        <position position="76"/>
    </location>
</feature>
<feature type="mutagenesis site" description="Loss of activity." evidence="1">
    <original>D</original>
    <variation>A</variation>
    <location>
        <position position="92"/>
    </location>
</feature>
<feature type="mutagenesis site" description="Strong decrease in activity." evidence="1">
    <original>D</original>
    <variation>A</variation>
    <location>
        <position position="94"/>
    </location>
</feature>
<feature type="mutagenesis site" description="Decrease in activity." evidence="1">
    <original>Y</original>
    <variation>A</variation>
    <location>
        <position position="152"/>
    </location>
</feature>
<feature type="mutagenesis site" description="Strong decrease in activity." evidence="1">
    <original>E</original>
    <variation>A</variation>
    <location>
        <position position="180"/>
    </location>
</feature>
<feature type="mutagenesis site" description="Loss of activity." evidence="1">
    <original>D</original>
    <variation>A</variation>
    <location>
        <position position="181"/>
    </location>
</feature>
<feature type="mutagenesis site" description="No change in activity." evidence="1">
    <original>D</original>
    <variation>A</variation>
    <location>
        <position position="209"/>
    </location>
</feature>
<feature type="mutagenesis site" description="No change in activity." evidence="1">
    <original>K</original>
    <variation>A</variation>
    <location>
        <position position="255"/>
    </location>
</feature>
<feature type="mutagenesis site" description="Strong decrease in activity." evidence="1">
    <original>R</original>
    <variation>A</variation>
    <location>
        <position position="259"/>
    </location>
</feature>
<feature type="mutagenesis site" description="No change in activity." evidence="1">
    <original>R</original>
    <variation>A</variation>
    <location>
        <position position="262"/>
    </location>
</feature>
<feature type="mutagenesis site" description="Decrease in activity." evidence="1">
    <original>H</original>
    <variation>A</variation>
    <location>
        <position position="263"/>
    </location>
</feature>
<feature type="mutagenesis site" description="Increase in activity." evidence="1">
    <original>I</original>
    <variation>E</variation>
    <location>
        <position position="322"/>
    </location>
</feature>
<feature type="strand" evidence="12">
    <location>
        <begin position="3"/>
        <end position="12"/>
    </location>
</feature>
<feature type="helix" evidence="12">
    <location>
        <begin position="14"/>
        <end position="16"/>
    </location>
</feature>
<feature type="helix" evidence="12">
    <location>
        <begin position="17"/>
        <end position="25"/>
    </location>
</feature>
<feature type="helix" evidence="12">
    <location>
        <begin position="31"/>
        <end position="33"/>
    </location>
</feature>
<feature type="strand" evidence="12">
    <location>
        <begin position="34"/>
        <end position="40"/>
    </location>
</feature>
<feature type="helix" evidence="12">
    <location>
        <begin position="48"/>
        <end position="54"/>
    </location>
</feature>
<feature type="strand" evidence="12">
    <location>
        <begin position="60"/>
        <end position="64"/>
    </location>
</feature>
<feature type="strand" evidence="12">
    <location>
        <begin position="70"/>
        <end position="72"/>
    </location>
</feature>
<feature type="helix" evidence="12">
    <location>
        <begin position="73"/>
        <end position="82"/>
    </location>
</feature>
<feature type="strand" evidence="12">
    <location>
        <begin position="85"/>
        <end position="90"/>
    </location>
</feature>
<feature type="helix" evidence="12">
    <location>
        <begin position="101"/>
        <end position="111"/>
    </location>
</feature>
<feature type="strand" evidence="12">
    <location>
        <begin position="115"/>
        <end position="119"/>
    </location>
</feature>
<feature type="strand" evidence="12">
    <location>
        <begin position="121"/>
        <end position="124"/>
    </location>
</feature>
<feature type="helix" evidence="12">
    <location>
        <begin position="133"/>
        <end position="135"/>
    </location>
</feature>
<feature type="strand" evidence="12">
    <location>
        <begin position="140"/>
        <end position="142"/>
    </location>
</feature>
<feature type="turn" evidence="12">
    <location>
        <begin position="145"/>
        <end position="149"/>
    </location>
</feature>
<feature type="helix" evidence="12">
    <location>
        <begin position="150"/>
        <end position="152"/>
    </location>
</feature>
<feature type="strand" evidence="12">
    <location>
        <begin position="158"/>
        <end position="161"/>
    </location>
</feature>
<feature type="helix" evidence="12">
    <location>
        <begin position="162"/>
        <end position="167"/>
    </location>
</feature>
<feature type="strand" evidence="12">
    <location>
        <begin position="177"/>
        <end position="179"/>
    </location>
</feature>
<feature type="helix" evidence="12">
    <location>
        <begin position="180"/>
        <end position="189"/>
    </location>
</feature>
<feature type="strand" evidence="12">
    <location>
        <begin position="195"/>
        <end position="198"/>
    </location>
</feature>
<feature type="strand" evidence="12">
    <location>
        <begin position="204"/>
        <end position="207"/>
    </location>
</feature>
<feature type="helix" evidence="12">
    <location>
        <begin position="224"/>
        <end position="238"/>
    </location>
</feature>
<feature type="strand" evidence="12">
    <location>
        <begin position="241"/>
        <end position="243"/>
    </location>
</feature>
<feature type="helix" evidence="12">
    <location>
        <begin position="246"/>
        <end position="263"/>
    </location>
</feature>
<feature type="turn" evidence="12">
    <location>
        <begin position="265"/>
        <end position="268"/>
    </location>
</feature>
<feature type="helix" evidence="12">
    <location>
        <begin position="269"/>
        <end position="271"/>
    </location>
</feature>
<feature type="strand" evidence="12">
    <location>
        <begin position="272"/>
        <end position="274"/>
    </location>
</feature>
<feature type="helix" evidence="12">
    <location>
        <begin position="276"/>
        <end position="290"/>
    </location>
</feature>
<feature type="helix" evidence="12">
    <location>
        <begin position="295"/>
        <end position="300"/>
    </location>
</feature>
<feature type="helix" evidence="12">
    <location>
        <begin position="303"/>
        <end position="305"/>
    </location>
</feature>
<feature type="helix" evidence="12">
    <location>
        <begin position="306"/>
        <end position="313"/>
    </location>
</feature>
<feature type="helix" evidence="12">
    <location>
        <begin position="317"/>
        <end position="325"/>
    </location>
</feature>
<keyword id="KW-0002">3D-structure</keyword>
<keyword id="KW-0961">Cell wall biogenesis/degradation</keyword>
<keyword id="KW-0328">Glycosyltransferase</keyword>
<keyword id="KW-0464">Manganese</keyword>
<keyword id="KW-0479">Metal-binding</keyword>
<keyword id="KW-0777">Teichoic acid biosynthesis</keyword>
<keyword id="KW-0808">Transferase</keyword>
<keyword id="KW-0843">Virulence</keyword>
<gene>
    <name evidence="2" type="primary">tarP</name>
    <name evidence="5" type="ordered locus">SA1808</name>
</gene>
<proteinExistence type="evidence at protein level"/>
<dbReference type="EC" id="2.4.1.-" evidence="1"/>
<dbReference type="EMBL" id="BA000018">
    <property type="protein sequence ID" value="BAB43088.1"/>
    <property type="molecule type" value="Genomic_DNA"/>
</dbReference>
<dbReference type="RefSeq" id="WP_001558608.1">
    <property type="nucleotide sequence ID" value="NC_002745.2"/>
</dbReference>
<dbReference type="PDB" id="6H1J">
    <property type="method" value="X-ray"/>
    <property type="resolution" value="1.86 A"/>
    <property type="chains" value="A/B/C=1-327"/>
</dbReference>
<dbReference type="PDB" id="6H21">
    <property type="method" value="X-ray"/>
    <property type="resolution" value="1.80 A"/>
    <property type="chains" value="A/B/C=1-327"/>
</dbReference>
<dbReference type="PDB" id="6H2N">
    <property type="method" value="X-ray"/>
    <property type="resolution" value="1.95 A"/>
    <property type="chains" value="A/B/C=1-327"/>
</dbReference>
<dbReference type="PDB" id="6H4F">
    <property type="method" value="X-ray"/>
    <property type="resolution" value="2.18 A"/>
    <property type="chains" value="A/B/C/D/E/F/G/H/I/O/P/Q=1-327"/>
</dbReference>
<dbReference type="PDB" id="6H4M">
    <property type="method" value="X-ray"/>
    <property type="resolution" value="2.73 A"/>
    <property type="chains" value="A/B/C/D/E/F/G/H/I/O/P/Q=1-327"/>
</dbReference>
<dbReference type="PDB" id="6HNQ">
    <property type="method" value="X-ray"/>
    <property type="resolution" value="2.40 A"/>
    <property type="chains" value="A/B/C/D/E/F/G/H/I/O/P/Q=1-327"/>
</dbReference>
<dbReference type="PDBsum" id="6H1J"/>
<dbReference type="PDBsum" id="6H21"/>
<dbReference type="PDBsum" id="6H2N"/>
<dbReference type="PDBsum" id="6H4F"/>
<dbReference type="PDBsum" id="6H4M"/>
<dbReference type="PDBsum" id="6HNQ"/>
<dbReference type="SMR" id="A0A0H3JNB0"/>
<dbReference type="EnsemblBacteria" id="BAB43088">
    <property type="protein sequence ID" value="BAB43088"/>
    <property type="gene ID" value="BAB43088"/>
</dbReference>
<dbReference type="KEGG" id="sau:SA1808"/>
<dbReference type="KEGG" id="vg:1260584"/>
<dbReference type="HOGENOM" id="CLU_025996_7_0_9"/>
<dbReference type="UniPathway" id="UPA00790"/>
<dbReference type="GO" id="GO:0016758">
    <property type="term" value="F:hexosyltransferase activity"/>
    <property type="evidence" value="ECO:0007669"/>
    <property type="project" value="UniProtKB-ARBA"/>
</dbReference>
<dbReference type="GO" id="GO:0046872">
    <property type="term" value="F:metal ion binding"/>
    <property type="evidence" value="ECO:0007669"/>
    <property type="project" value="UniProtKB-KW"/>
</dbReference>
<dbReference type="GO" id="GO:0071555">
    <property type="term" value="P:cell wall organization"/>
    <property type="evidence" value="ECO:0007669"/>
    <property type="project" value="UniProtKB-KW"/>
</dbReference>
<dbReference type="GO" id="GO:0019350">
    <property type="term" value="P:teichoic acid biosynthetic process"/>
    <property type="evidence" value="ECO:0007669"/>
    <property type="project" value="UniProtKB-KW"/>
</dbReference>
<dbReference type="CDD" id="cd00761">
    <property type="entry name" value="Glyco_tranf_GTA_type"/>
    <property type="match status" value="1"/>
</dbReference>
<dbReference type="Gene3D" id="3.90.550.10">
    <property type="entry name" value="Spore Coat Polysaccharide Biosynthesis Protein SpsA, Chain A"/>
    <property type="match status" value="1"/>
</dbReference>
<dbReference type="InterPro" id="IPR001173">
    <property type="entry name" value="Glyco_trans_2-like"/>
</dbReference>
<dbReference type="InterPro" id="IPR029044">
    <property type="entry name" value="Nucleotide-diphossugar_trans"/>
</dbReference>
<dbReference type="InterPro" id="IPR054028">
    <property type="entry name" value="TarS/TarP_linker"/>
</dbReference>
<dbReference type="PANTHER" id="PTHR22916">
    <property type="entry name" value="GLYCOSYLTRANSFERASE"/>
    <property type="match status" value="1"/>
</dbReference>
<dbReference type="PANTHER" id="PTHR22916:SF3">
    <property type="entry name" value="UDP-GLCNAC:BETAGAL BETA-1,3-N-ACETYLGLUCOSAMINYLTRANSFERASE-LIKE PROTEIN 1"/>
    <property type="match status" value="1"/>
</dbReference>
<dbReference type="Pfam" id="PF00535">
    <property type="entry name" value="Glycos_transf_2"/>
    <property type="match status" value="1"/>
</dbReference>
<dbReference type="Pfam" id="PF22181">
    <property type="entry name" value="TarS_linker"/>
    <property type="match status" value="1"/>
</dbReference>
<dbReference type="SUPFAM" id="SSF53448">
    <property type="entry name" value="Nucleotide-diphospho-sugar transferases"/>
    <property type="match status" value="1"/>
</dbReference>
<organism>
    <name type="scientific">Staphylococcus aureus (strain N315)</name>
    <dbReference type="NCBI Taxonomy" id="158879"/>
    <lineage>
        <taxon>Bacteria</taxon>
        <taxon>Bacillati</taxon>
        <taxon>Bacillota</taxon>
        <taxon>Bacilli</taxon>
        <taxon>Bacillales</taxon>
        <taxon>Staphylococcaceae</taxon>
        <taxon>Staphylococcus</taxon>
    </lineage>
</organism>
<comment type="function">
    <text evidence="1">Attaches beta-O-GlcNAc (beta-O-N-acetyl-D-glucosamine) residues to the C3 position of poly(RboP)-wall teichoic acids (WTAs). Attenuates immunogenicity of WTA and protects S.aureus against adaptative host defenses by allowing bacteria to evade recognition by preexisting anti-S.aureus antibodies. Also protects the cell from podophage infection.</text>
</comment>
<comment type="catalytic activity">
    <reaction evidence="1">
        <text>4-O-[(D-ribitylphospho)(n)-di{(2R)-glycerylphospho}]-N-acetyl-beta-D-mannosaminyl-(1-&gt;4)-N-acetyl-alpha-D-glucosaminyl di-trans,octa-cis-undecaprenyl diphosphate + n UDP-N-acetyl-alpha-D-glucosamine = 4-O-([3-N-acetyl-beta-D-glucosaminyl-1-D-ribitylphospho](n)-di{[2R]-1-glycerylphospho})-N-acetyl-beta-D-mannosaminyl-(1-&gt;4)-N-acetyl-alpha-D-glucosaminyl di-trans,octa-cis-undecaprenyl diphosphate + n UDP + n H(+)</text>
        <dbReference type="Rhea" id="RHEA:58948"/>
        <dbReference type="Rhea" id="RHEA-COMP:12840"/>
        <dbReference type="Rhea" id="RHEA-COMP:15259"/>
        <dbReference type="ChEBI" id="CHEBI:15378"/>
        <dbReference type="ChEBI" id="CHEBI:57705"/>
        <dbReference type="ChEBI" id="CHEBI:58223"/>
        <dbReference type="ChEBI" id="CHEBI:133896"/>
        <dbReference type="ChEBI" id="CHEBI:142885"/>
    </reaction>
</comment>
<comment type="cofactor">
    <cofactor evidence="1">
        <name>Mn(2+)</name>
        <dbReference type="ChEBI" id="CHEBI:29035"/>
    </cofactor>
</comment>
<comment type="pathway">
    <text evidence="1">Cell wall biogenesis; poly(ribitol phosphate) teichoic acid biosynthesis.</text>
</comment>
<comment type="subunit">
    <text evidence="1">Homotrimer.</text>
</comment>
<comment type="disruption phenotype">
    <text evidence="1">Deletion of the gene leads to a substantially increased capacity of human neutrophils to phagocytose opsonized S.aureus. Inactivation renders the cell susceptible to podophages.</text>
</comment>
<comment type="miscellaneous">
    <text evidence="4">TarP inhibitors could be used as a new strategy for rendering methicillin resistant Staphylococcus aureus (MRSA) strains susceptible to human host defenses.</text>
</comment>
<comment type="similarity">
    <text evidence="3">Belongs to the glycosyltransferase 2 family.</text>
</comment>